<proteinExistence type="inferred from homology"/>
<comment type="similarity">
    <text evidence="1">Belongs to the UPF0270 family.</text>
</comment>
<gene>
    <name type="ordered locus">PP_1747</name>
</gene>
<feature type="chain" id="PRO_0000214855" description="UPF0270 protein PP_1747">
    <location>
        <begin position="1"/>
        <end position="75"/>
    </location>
</feature>
<keyword id="KW-1185">Reference proteome</keyword>
<dbReference type="EMBL" id="AE015451">
    <property type="protein sequence ID" value="AAN67367.1"/>
    <property type="molecule type" value="Genomic_DNA"/>
</dbReference>
<dbReference type="RefSeq" id="NP_743903.1">
    <property type="nucleotide sequence ID" value="NC_002947.4"/>
</dbReference>
<dbReference type="RefSeq" id="WP_004575803.1">
    <property type="nucleotide sequence ID" value="NZ_CP169744.1"/>
</dbReference>
<dbReference type="SMR" id="Q88M28"/>
<dbReference type="STRING" id="160488.PP_1747"/>
<dbReference type="PaxDb" id="160488-PP_1747"/>
<dbReference type="KEGG" id="ppu:PP_1747"/>
<dbReference type="PATRIC" id="fig|160488.4.peg.1841"/>
<dbReference type="eggNOG" id="COG3089">
    <property type="taxonomic scope" value="Bacteria"/>
</dbReference>
<dbReference type="HOGENOM" id="CLU_186759_2_0_6"/>
<dbReference type="OrthoDB" id="6120729at2"/>
<dbReference type="PhylomeDB" id="Q88M28"/>
<dbReference type="BioCyc" id="PPUT160488:G1G01-1848-MONOMER"/>
<dbReference type="Proteomes" id="UP000000556">
    <property type="component" value="Chromosome"/>
</dbReference>
<dbReference type="Gene3D" id="1.10.10.610">
    <property type="entry name" value="YehU-like"/>
    <property type="match status" value="1"/>
</dbReference>
<dbReference type="HAMAP" id="MF_00690">
    <property type="entry name" value="UPF0270"/>
    <property type="match status" value="1"/>
</dbReference>
<dbReference type="InterPro" id="IPR010648">
    <property type="entry name" value="UPF0270"/>
</dbReference>
<dbReference type="InterPro" id="IPR036685">
    <property type="entry name" value="YehU-like_sf"/>
</dbReference>
<dbReference type="NCBIfam" id="NF001441">
    <property type="entry name" value="PRK00304.1"/>
    <property type="match status" value="1"/>
</dbReference>
<dbReference type="Pfam" id="PF06794">
    <property type="entry name" value="UPF0270"/>
    <property type="match status" value="1"/>
</dbReference>
<dbReference type="PIRSF" id="PIRSF006169">
    <property type="entry name" value="UCP006169"/>
    <property type="match status" value="1"/>
</dbReference>
<dbReference type="SUPFAM" id="SSF118001">
    <property type="entry name" value="YehU-like"/>
    <property type="match status" value="1"/>
</dbReference>
<accession>Q88M28</accession>
<evidence type="ECO:0000255" key="1">
    <source>
        <dbReference type="HAMAP-Rule" id="MF_00690"/>
    </source>
</evidence>
<reference key="1">
    <citation type="journal article" date="2002" name="Environ. Microbiol.">
        <title>Complete genome sequence and comparative analysis of the metabolically versatile Pseudomonas putida KT2440.</title>
        <authorList>
            <person name="Nelson K.E."/>
            <person name="Weinel C."/>
            <person name="Paulsen I.T."/>
            <person name="Dodson R.J."/>
            <person name="Hilbert H."/>
            <person name="Martins dos Santos V.A.P."/>
            <person name="Fouts D.E."/>
            <person name="Gill S.R."/>
            <person name="Pop M."/>
            <person name="Holmes M."/>
            <person name="Brinkac L.M."/>
            <person name="Beanan M.J."/>
            <person name="DeBoy R.T."/>
            <person name="Daugherty S.C."/>
            <person name="Kolonay J.F."/>
            <person name="Madupu R."/>
            <person name="Nelson W.C."/>
            <person name="White O."/>
            <person name="Peterson J.D."/>
            <person name="Khouri H.M."/>
            <person name="Hance I."/>
            <person name="Chris Lee P."/>
            <person name="Holtzapple E.K."/>
            <person name="Scanlan D."/>
            <person name="Tran K."/>
            <person name="Moazzez A."/>
            <person name="Utterback T.R."/>
            <person name="Rizzo M."/>
            <person name="Lee K."/>
            <person name="Kosack D."/>
            <person name="Moestl D."/>
            <person name="Wedler H."/>
            <person name="Lauber J."/>
            <person name="Stjepandic D."/>
            <person name="Hoheisel J."/>
            <person name="Straetz M."/>
            <person name="Heim S."/>
            <person name="Kiewitz C."/>
            <person name="Eisen J.A."/>
            <person name="Timmis K.N."/>
            <person name="Duesterhoeft A."/>
            <person name="Tuemmler B."/>
            <person name="Fraser C.M."/>
        </authorList>
    </citation>
    <scope>NUCLEOTIDE SEQUENCE [LARGE SCALE GENOMIC DNA]</scope>
    <source>
        <strain>ATCC 47054 / DSM 6125 / CFBP 8728 / NCIMB 11950 / KT2440</strain>
    </source>
</reference>
<organism>
    <name type="scientific">Pseudomonas putida (strain ATCC 47054 / DSM 6125 / CFBP 8728 / NCIMB 11950 / KT2440)</name>
    <dbReference type="NCBI Taxonomy" id="160488"/>
    <lineage>
        <taxon>Bacteria</taxon>
        <taxon>Pseudomonadati</taxon>
        <taxon>Pseudomonadota</taxon>
        <taxon>Gammaproteobacteria</taxon>
        <taxon>Pseudomonadales</taxon>
        <taxon>Pseudomonadaceae</taxon>
        <taxon>Pseudomonas</taxon>
    </lineage>
</organism>
<sequence length="75" mass="8613">MLIPYDQLQAETLTRLIEDFVTRDGTDNGDDTPLETRVLRVRQALAKGQAFILFDLESQQCQLLAKHDVPRELLE</sequence>
<protein>
    <recommendedName>
        <fullName evidence="1">UPF0270 protein PP_1747</fullName>
    </recommendedName>
</protein>
<name>Y1747_PSEPK</name>